<gene>
    <name evidence="2" type="primary">rpsL</name>
    <name type="ordered locus">HEAR3171</name>
</gene>
<sequence>MPTINQLIRQPRVSARVKSKSPALENSPQKRGVCTRVYTTTPKKPNSALRKVAKVRLTNGFEVISYIGGEGHNLQEHSVVLLRGGRVKDLPGVRYHMVRGALDTQGVKDRKQARSKYGTKRAKAGKK</sequence>
<organism>
    <name type="scientific">Herminiimonas arsenicoxydans</name>
    <dbReference type="NCBI Taxonomy" id="204773"/>
    <lineage>
        <taxon>Bacteria</taxon>
        <taxon>Pseudomonadati</taxon>
        <taxon>Pseudomonadota</taxon>
        <taxon>Betaproteobacteria</taxon>
        <taxon>Burkholderiales</taxon>
        <taxon>Oxalobacteraceae</taxon>
        <taxon>Herminiimonas</taxon>
    </lineage>
</organism>
<reference key="1">
    <citation type="journal article" date="2007" name="PLoS Genet.">
        <title>A tale of two oxidation states: bacterial colonization of arsenic-rich environments.</title>
        <authorList>
            <person name="Muller D."/>
            <person name="Medigue C."/>
            <person name="Koechler S."/>
            <person name="Barbe V."/>
            <person name="Barakat M."/>
            <person name="Talla E."/>
            <person name="Bonnefoy V."/>
            <person name="Krin E."/>
            <person name="Arsene-Ploetze F."/>
            <person name="Carapito C."/>
            <person name="Chandler M."/>
            <person name="Cournoyer B."/>
            <person name="Cruveiller S."/>
            <person name="Dossat C."/>
            <person name="Duval S."/>
            <person name="Heymann M."/>
            <person name="Leize E."/>
            <person name="Lieutaud A."/>
            <person name="Lievremont D."/>
            <person name="Makita Y."/>
            <person name="Mangenot S."/>
            <person name="Nitschke W."/>
            <person name="Ortet P."/>
            <person name="Perdrial N."/>
            <person name="Schoepp B."/>
            <person name="Siguier P."/>
            <person name="Simeonova D.D."/>
            <person name="Rouy Z."/>
            <person name="Segurens B."/>
            <person name="Turlin E."/>
            <person name="Vallenet D."/>
            <person name="van Dorsselaer A."/>
            <person name="Weiss S."/>
            <person name="Weissenbach J."/>
            <person name="Lett M.-C."/>
            <person name="Danchin A."/>
            <person name="Bertin P.N."/>
        </authorList>
    </citation>
    <scope>NUCLEOTIDE SEQUENCE [LARGE SCALE GENOMIC DNA]</scope>
    <source>
        <strain>ULPAs1</strain>
    </source>
</reference>
<accession>A4G9U3</accession>
<evidence type="ECO:0000250" key="1"/>
<evidence type="ECO:0000255" key="2">
    <source>
        <dbReference type="HAMAP-Rule" id="MF_00403"/>
    </source>
</evidence>
<evidence type="ECO:0000256" key="3">
    <source>
        <dbReference type="SAM" id="MobiDB-lite"/>
    </source>
</evidence>
<evidence type="ECO:0000305" key="4"/>
<comment type="function">
    <text evidence="2">With S4 and S5 plays an important role in translational accuracy.</text>
</comment>
<comment type="function">
    <text evidence="2">Interacts with and stabilizes bases of the 16S rRNA that are involved in tRNA selection in the A site and with the mRNA backbone. Located at the interface of the 30S and 50S subunits, it traverses the body of the 30S subunit contacting proteins on the other side and probably holding the rRNA structure together. The combined cluster of proteins S8, S12 and S17 appears to hold together the shoulder and platform of the 30S subunit.</text>
</comment>
<comment type="subunit">
    <text evidence="2">Part of the 30S ribosomal subunit. Contacts proteins S8 and S17. May interact with IF1 in the 30S initiation complex.</text>
</comment>
<comment type="similarity">
    <text evidence="2">Belongs to the universal ribosomal protein uS12 family.</text>
</comment>
<proteinExistence type="inferred from homology"/>
<name>RS12_HERAR</name>
<dbReference type="EMBL" id="CU207211">
    <property type="protein sequence ID" value="CAL63280.1"/>
    <property type="molecule type" value="Genomic_DNA"/>
</dbReference>
<dbReference type="SMR" id="A4G9U3"/>
<dbReference type="STRING" id="204773.HEAR3171"/>
<dbReference type="KEGG" id="har:HEAR3171"/>
<dbReference type="eggNOG" id="COG0048">
    <property type="taxonomic scope" value="Bacteria"/>
</dbReference>
<dbReference type="HOGENOM" id="CLU_104295_1_2_4"/>
<dbReference type="OrthoDB" id="9802366at2"/>
<dbReference type="Proteomes" id="UP000006697">
    <property type="component" value="Chromosome"/>
</dbReference>
<dbReference type="GO" id="GO:0015935">
    <property type="term" value="C:small ribosomal subunit"/>
    <property type="evidence" value="ECO:0007669"/>
    <property type="project" value="InterPro"/>
</dbReference>
<dbReference type="GO" id="GO:0019843">
    <property type="term" value="F:rRNA binding"/>
    <property type="evidence" value="ECO:0007669"/>
    <property type="project" value="UniProtKB-UniRule"/>
</dbReference>
<dbReference type="GO" id="GO:0003735">
    <property type="term" value="F:structural constituent of ribosome"/>
    <property type="evidence" value="ECO:0007669"/>
    <property type="project" value="InterPro"/>
</dbReference>
<dbReference type="GO" id="GO:0000049">
    <property type="term" value="F:tRNA binding"/>
    <property type="evidence" value="ECO:0007669"/>
    <property type="project" value="UniProtKB-UniRule"/>
</dbReference>
<dbReference type="GO" id="GO:0006412">
    <property type="term" value="P:translation"/>
    <property type="evidence" value="ECO:0007669"/>
    <property type="project" value="UniProtKB-UniRule"/>
</dbReference>
<dbReference type="CDD" id="cd03368">
    <property type="entry name" value="Ribosomal_S12"/>
    <property type="match status" value="1"/>
</dbReference>
<dbReference type="FunFam" id="2.40.50.140:FF:000001">
    <property type="entry name" value="30S ribosomal protein S12"/>
    <property type="match status" value="1"/>
</dbReference>
<dbReference type="Gene3D" id="2.40.50.140">
    <property type="entry name" value="Nucleic acid-binding proteins"/>
    <property type="match status" value="1"/>
</dbReference>
<dbReference type="HAMAP" id="MF_00403_B">
    <property type="entry name" value="Ribosomal_uS12_B"/>
    <property type="match status" value="1"/>
</dbReference>
<dbReference type="InterPro" id="IPR012340">
    <property type="entry name" value="NA-bd_OB-fold"/>
</dbReference>
<dbReference type="InterPro" id="IPR006032">
    <property type="entry name" value="Ribosomal_uS12"/>
</dbReference>
<dbReference type="InterPro" id="IPR005679">
    <property type="entry name" value="Ribosomal_uS12_bac"/>
</dbReference>
<dbReference type="NCBIfam" id="TIGR00981">
    <property type="entry name" value="rpsL_bact"/>
    <property type="match status" value="1"/>
</dbReference>
<dbReference type="PANTHER" id="PTHR11652">
    <property type="entry name" value="30S RIBOSOMAL PROTEIN S12 FAMILY MEMBER"/>
    <property type="match status" value="1"/>
</dbReference>
<dbReference type="Pfam" id="PF00164">
    <property type="entry name" value="Ribosom_S12_S23"/>
    <property type="match status" value="1"/>
</dbReference>
<dbReference type="PIRSF" id="PIRSF002133">
    <property type="entry name" value="Ribosomal_S12/S23"/>
    <property type="match status" value="1"/>
</dbReference>
<dbReference type="PRINTS" id="PR01034">
    <property type="entry name" value="RIBOSOMALS12"/>
</dbReference>
<dbReference type="SUPFAM" id="SSF50249">
    <property type="entry name" value="Nucleic acid-binding proteins"/>
    <property type="match status" value="1"/>
</dbReference>
<dbReference type="PROSITE" id="PS00055">
    <property type="entry name" value="RIBOSOMAL_S12"/>
    <property type="match status" value="1"/>
</dbReference>
<keyword id="KW-0488">Methylation</keyword>
<keyword id="KW-1185">Reference proteome</keyword>
<keyword id="KW-0687">Ribonucleoprotein</keyword>
<keyword id="KW-0689">Ribosomal protein</keyword>
<keyword id="KW-0694">RNA-binding</keyword>
<keyword id="KW-0699">rRNA-binding</keyword>
<keyword id="KW-0820">tRNA-binding</keyword>
<feature type="chain" id="PRO_0000295985" description="Small ribosomal subunit protein uS12">
    <location>
        <begin position="1"/>
        <end position="127"/>
    </location>
</feature>
<feature type="region of interest" description="Disordered" evidence="3">
    <location>
        <begin position="104"/>
        <end position="127"/>
    </location>
</feature>
<feature type="compositionally biased region" description="Basic residues" evidence="3">
    <location>
        <begin position="113"/>
        <end position="127"/>
    </location>
</feature>
<feature type="modified residue" description="3-methylthioaspartic acid" evidence="1">
    <location>
        <position position="89"/>
    </location>
</feature>
<protein>
    <recommendedName>
        <fullName evidence="2">Small ribosomal subunit protein uS12</fullName>
    </recommendedName>
    <alternativeName>
        <fullName evidence="4">30S ribosomal protein S12</fullName>
    </alternativeName>
</protein>